<organism>
    <name type="scientific">Burkholderia cenocepacia (strain HI2424)</name>
    <dbReference type="NCBI Taxonomy" id="331272"/>
    <lineage>
        <taxon>Bacteria</taxon>
        <taxon>Pseudomonadati</taxon>
        <taxon>Pseudomonadota</taxon>
        <taxon>Betaproteobacteria</taxon>
        <taxon>Burkholderiales</taxon>
        <taxon>Burkholderiaceae</taxon>
        <taxon>Burkholderia</taxon>
        <taxon>Burkholderia cepacia complex</taxon>
    </lineage>
</organism>
<accession>A0B2F6</accession>
<sequence>MSVYGLQRLYIGGGYVDATSGKTFDTFDPATGELLAQVQQASAADVDRAVASAQEGQREWAAMTAMQRSRILRRAVELLRERNDELAAIETRDTGKPIGETLAVDIVTGADVIEYYAGLATAIEGLQVPLRAESFVYTRREPLGVCAGIGAWNYPIQIACWKTAPALAAGNAMVFKPSEVTPLTALKLAEIYTEAGVPAGVFNVVQGDGSVGALLTGHPDIAKVSFTGGVETGKKVMSLAGASSLKEVTMELGGKSPLIVFDDADLDRAADIAVTANFFSSGQVCTNGTRVFVHRSIKDAFTQKVLERVKRIRVGKPTDADTNFGPLVSAAQLDKVLGFIESGKAEGAKLLAGGTRLTDGHFGSGQYVAPTVFGDCRDDMKIVREEIFGPVMSILEFESEDEVIARANDTHYGLAAGVVTENLSRAHRAIHRLEAGICWINTWGESPAEMPVGGYKQSGVGRENGITTLEHYTRIKSVQVELGRYNPVF</sequence>
<gene>
    <name evidence="1" type="primary">betB</name>
    <name type="ordered locus">Bcen2424_5099</name>
</gene>
<dbReference type="EC" id="1.2.1.8" evidence="1"/>
<dbReference type="EMBL" id="CP000459">
    <property type="protein sequence ID" value="ABK11832.1"/>
    <property type="molecule type" value="Genomic_DNA"/>
</dbReference>
<dbReference type="RefSeq" id="WP_011547082.1">
    <property type="nucleotide sequence ID" value="NC_008543.1"/>
</dbReference>
<dbReference type="SMR" id="A0B2F6"/>
<dbReference type="KEGG" id="bch:Bcen2424_5099"/>
<dbReference type="HOGENOM" id="CLU_005391_1_0_4"/>
<dbReference type="UniPathway" id="UPA00529">
    <property type="reaction ID" value="UER00386"/>
</dbReference>
<dbReference type="GO" id="GO:0008802">
    <property type="term" value="F:betaine-aldehyde dehydrogenase (NAD+) activity"/>
    <property type="evidence" value="ECO:0007669"/>
    <property type="project" value="UniProtKB-UniRule"/>
</dbReference>
<dbReference type="GO" id="GO:0046872">
    <property type="term" value="F:metal ion binding"/>
    <property type="evidence" value="ECO:0007669"/>
    <property type="project" value="UniProtKB-KW"/>
</dbReference>
<dbReference type="GO" id="GO:0019285">
    <property type="term" value="P:glycine betaine biosynthetic process from choline"/>
    <property type="evidence" value="ECO:0007669"/>
    <property type="project" value="UniProtKB-UniRule"/>
</dbReference>
<dbReference type="CDD" id="cd07090">
    <property type="entry name" value="ALDH_F9_TMBADH"/>
    <property type="match status" value="1"/>
</dbReference>
<dbReference type="FunFam" id="3.40.309.10:FF:000014">
    <property type="entry name" value="NAD/NADP-dependent betaine aldehyde dehydrogenase"/>
    <property type="match status" value="1"/>
</dbReference>
<dbReference type="FunFam" id="3.40.605.10:FF:000007">
    <property type="entry name" value="NAD/NADP-dependent betaine aldehyde dehydrogenase"/>
    <property type="match status" value="1"/>
</dbReference>
<dbReference type="Gene3D" id="3.40.605.10">
    <property type="entry name" value="Aldehyde Dehydrogenase, Chain A, domain 1"/>
    <property type="match status" value="1"/>
</dbReference>
<dbReference type="Gene3D" id="3.40.309.10">
    <property type="entry name" value="Aldehyde Dehydrogenase, Chain A, domain 2"/>
    <property type="match status" value="1"/>
</dbReference>
<dbReference type="HAMAP" id="MF_00804">
    <property type="entry name" value="BADH"/>
    <property type="match status" value="1"/>
</dbReference>
<dbReference type="InterPro" id="IPR016161">
    <property type="entry name" value="Ald_DH/histidinol_DH"/>
</dbReference>
<dbReference type="InterPro" id="IPR016163">
    <property type="entry name" value="Ald_DH_C"/>
</dbReference>
<dbReference type="InterPro" id="IPR016160">
    <property type="entry name" value="Ald_DH_CS_CYS"/>
</dbReference>
<dbReference type="InterPro" id="IPR029510">
    <property type="entry name" value="Ald_DH_CS_GLU"/>
</dbReference>
<dbReference type="InterPro" id="IPR016162">
    <property type="entry name" value="Ald_DH_N"/>
</dbReference>
<dbReference type="InterPro" id="IPR015590">
    <property type="entry name" value="Aldehyde_DH_dom"/>
</dbReference>
<dbReference type="InterPro" id="IPR011264">
    <property type="entry name" value="BADH"/>
</dbReference>
<dbReference type="NCBIfam" id="TIGR01804">
    <property type="entry name" value="BADH"/>
    <property type="match status" value="1"/>
</dbReference>
<dbReference type="NCBIfam" id="NF009725">
    <property type="entry name" value="PRK13252.1"/>
    <property type="match status" value="1"/>
</dbReference>
<dbReference type="PANTHER" id="PTHR11699">
    <property type="entry name" value="ALDEHYDE DEHYDROGENASE-RELATED"/>
    <property type="match status" value="1"/>
</dbReference>
<dbReference type="Pfam" id="PF00171">
    <property type="entry name" value="Aldedh"/>
    <property type="match status" value="1"/>
</dbReference>
<dbReference type="SUPFAM" id="SSF53720">
    <property type="entry name" value="ALDH-like"/>
    <property type="match status" value="1"/>
</dbReference>
<dbReference type="PROSITE" id="PS00070">
    <property type="entry name" value="ALDEHYDE_DEHYDR_CYS"/>
    <property type="match status" value="1"/>
</dbReference>
<dbReference type="PROSITE" id="PS00687">
    <property type="entry name" value="ALDEHYDE_DEHYDR_GLU"/>
    <property type="match status" value="1"/>
</dbReference>
<comment type="function">
    <text evidence="1">Involved in the biosynthesis of the osmoprotectant glycine betaine. Catalyzes the irreversible oxidation of betaine aldehyde to the corresponding acid.</text>
</comment>
<comment type="catalytic activity">
    <reaction evidence="1">
        <text>betaine aldehyde + NAD(+) + H2O = glycine betaine + NADH + 2 H(+)</text>
        <dbReference type="Rhea" id="RHEA:15305"/>
        <dbReference type="ChEBI" id="CHEBI:15377"/>
        <dbReference type="ChEBI" id="CHEBI:15378"/>
        <dbReference type="ChEBI" id="CHEBI:15710"/>
        <dbReference type="ChEBI" id="CHEBI:17750"/>
        <dbReference type="ChEBI" id="CHEBI:57540"/>
        <dbReference type="ChEBI" id="CHEBI:57945"/>
        <dbReference type="EC" id="1.2.1.8"/>
    </reaction>
    <physiologicalReaction direction="left-to-right" evidence="1">
        <dbReference type="Rhea" id="RHEA:15306"/>
    </physiologicalReaction>
</comment>
<comment type="cofactor">
    <cofactor evidence="1">
        <name>K(+)</name>
        <dbReference type="ChEBI" id="CHEBI:29103"/>
    </cofactor>
    <text evidence="1">Binds 2 potassium ions per subunit.</text>
</comment>
<comment type="pathway">
    <text evidence="1">Amine and polyamine biosynthesis; betaine biosynthesis via choline pathway; betaine from betaine aldehyde: step 1/1.</text>
</comment>
<comment type="subunit">
    <text evidence="1">Dimer of dimers.</text>
</comment>
<comment type="similarity">
    <text evidence="1">Belongs to the aldehyde dehydrogenase family.</text>
</comment>
<proteinExistence type="inferred from homology"/>
<name>BETB_BURCH</name>
<keyword id="KW-0479">Metal-binding</keyword>
<keyword id="KW-0520">NAD</keyword>
<keyword id="KW-0521">NADP</keyword>
<keyword id="KW-0558">Oxidation</keyword>
<keyword id="KW-0560">Oxidoreductase</keyword>
<keyword id="KW-0630">Potassium</keyword>
<protein>
    <recommendedName>
        <fullName evidence="1">Betaine aldehyde dehydrogenase</fullName>
        <shortName evidence="1">BADH</shortName>
        <ecNumber evidence="1">1.2.1.8</ecNumber>
    </recommendedName>
</protein>
<feature type="chain" id="PRO_1000047032" description="Betaine aldehyde dehydrogenase">
    <location>
        <begin position="1"/>
        <end position="489"/>
    </location>
</feature>
<feature type="active site" description="Charge relay system" evidence="1">
    <location>
        <position position="162"/>
    </location>
</feature>
<feature type="active site" description="Proton acceptor" evidence="1">
    <location>
        <position position="251"/>
    </location>
</feature>
<feature type="active site" description="Nucleophile" evidence="1">
    <location>
        <position position="285"/>
    </location>
</feature>
<feature type="active site" description="Charge relay system" evidence="1">
    <location>
        <position position="463"/>
    </location>
</feature>
<feature type="binding site" evidence="1">
    <location>
        <position position="26"/>
    </location>
    <ligand>
        <name>K(+)</name>
        <dbReference type="ChEBI" id="CHEBI:29103"/>
        <label>1</label>
    </ligand>
</feature>
<feature type="binding site" evidence="1">
    <location>
        <position position="93"/>
    </location>
    <ligand>
        <name>K(+)</name>
        <dbReference type="ChEBI" id="CHEBI:29103"/>
        <label>1</label>
    </ligand>
</feature>
<feature type="binding site" evidence="1">
    <location>
        <begin position="150"/>
        <end position="152"/>
    </location>
    <ligand>
        <name>NAD(+)</name>
        <dbReference type="ChEBI" id="CHEBI:57540"/>
    </ligand>
</feature>
<feature type="binding site" evidence="1">
    <location>
        <begin position="176"/>
        <end position="179"/>
    </location>
    <ligand>
        <name>NAD(+)</name>
        <dbReference type="ChEBI" id="CHEBI:57540"/>
    </ligand>
</feature>
<feature type="binding site" evidence="1">
    <location>
        <position position="180"/>
    </location>
    <ligand>
        <name>K(+)</name>
        <dbReference type="ChEBI" id="CHEBI:29103"/>
        <label>1</label>
    </ligand>
</feature>
<feature type="binding site" evidence="1">
    <location>
        <begin position="229"/>
        <end position="232"/>
    </location>
    <ligand>
        <name>NAD(+)</name>
        <dbReference type="ChEBI" id="CHEBI:57540"/>
    </ligand>
</feature>
<feature type="binding site" evidence="1">
    <location>
        <position position="245"/>
    </location>
    <ligand>
        <name>K(+)</name>
        <dbReference type="ChEBI" id="CHEBI:29103"/>
        <label>2</label>
    </ligand>
</feature>
<feature type="binding site" evidence="1">
    <location>
        <position position="253"/>
    </location>
    <ligand>
        <name>NAD(+)</name>
        <dbReference type="ChEBI" id="CHEBI:57540"/>
    </ligand>
</feature>
<feature type="binding site" description="covalent" evidence="1">
    <location>
        <position position="285"/>
    </location>
    <ligand>
        <name>NAD(+)</name>
        <dbReference type="ChEBI" id="CHEBI:57540"/>
    </ligand>
</feature>
<feature type="binding site" evidence="1">
    <location>
        <position position="386"/>
    </location>
    <ligand>
        <name>NAD(+)</name>
        <dbReference type="ChEBI" id="CHEBI:57540"/>
    </ligand>
</feature>
<feature type="binding site" evidence="1">
    <location>
        <position position="456"/>
    </location>
    <ligand>
        <name>K(+)</name>
        <dbReference type="ChEBI" id="CHEBI:29103"/>
        <label>2</label>
    </ligand>
</feature>
<feature type="binding site" evidence="1">
    <location>
        <position position="459"/>
    </location>
    <ligand>
        <name>K(+)</name>
        <dbReference type="ChEBI" id="CHEBI:29103"/>
        <label>2</label>
    </ligand>
</feature>
<feature type="site" description="Seems to be a necessary countercharge to the potassium cations" evidence="1">
    <location>
        <position position="247"/>
    </location>
</feature>
<feature type="modified residue" description="Cysteine sulfenic acid (-SOH)" evidence="1">
    <location>
        <position position="285"/>
    </location>
</feature>
<reference key="1">
    <citation type="submission" date="2006-08" db="EMBL/GenBank/DDBJ databases">
        <title>Complete sequence of chromosome 2 of Burkholderia cenocepacia HI2424.</title>
        <authorList>
            <person name="Copeland A."/>
            <person name="Lucas S."/>
            <person name="Lapidus A."/>
            <person name="Barry K."/>
            <person name="Detter J.C."/>
            <person name="Glavina del Rio T."/>
            <person name="Hammon N."/>
            <person name="Israni S."/>
            <person name="Pitluck S."/>
            <person name="Chain P."/>
            <person name="Malfatti S."/>
            <person name="Shin M."/>
            <person name="Vergez L."/>
            <person name="Schmutz J."/>
            <person name="Larimer F."/>
            <person name="Land M."/>
            <person name="Hauser L."/>
            <person name="Kyrpides N."/>
            <person name="Kim E."/>
            <person name="LiPuma J.J."/>
            <person name="Gonzalez C.F."/>
            <person name="Konstantinidis K."/>
            <person name="Tiedje J.M."/>
            <person name="Richardson P."/>
        </authorList>
    </citation>
    <scope>NUCLEOTIDE SEQUENCE [LARGE SCALE GENOMIC DNA]</scope>
    <source>
        <strain>HI2424</strain>
    </source>
</reference>
<evidence type="ECO:0000255" key="1">
    <source>
        <dbReference type="HAMAP-Rule" id="MF_00804"/>
    </source>
</evidence>